<evidence type="ECO:0000255" key="1">
    <source>
        <dbReference type="HAMAP-Rule" id="MF_00050"/>
    </source>
</evidence>
<sequence length="218" mass="23799">MADVSAKLVKDLRDKTGAGMMDCKKALAESDGDMIKASEWLRKKGIASAEKKSSRIAAEGAIGTYIHTGARVGVLLELNCETDFVARGDLFQGLLKDVAMQVAACPNVEYVSTEEIPVDVVEKEKSIEMGRDDLSGKPEQMKAKIVEGRIGKRLKELVLLEQPFIRDSSMTVAELVKQVAGKIGENVQVRRFTRYTLGEGIEVDQTDFATEVASMKTA</sequence>
<organism>
    <name type="scientific">Prochlorococcus marinus (strain MIT 9303)</name>
    <dbReference type="NCBI Taxonomy" id="59922"/>
    <lineage>
        <taxon>Bacteria</taxon>
        <taxon>Bacillati</taxon>
        <taxon>Cyanobacteriota</taxon>
        <taxon>Cyanophyceae</taxon>
        <taxon>Synechococcales</taxon>
        <taxon>Prochlorococcaceae</taxon>
        <taxon>Prochlorococcus</taxon>
    </lineage>
</organism>
<comment type="function">
    <text evidence="1">Associates with the EF-Tu.GDP complex and induces the exchange of GDP to GTP. It remains bound to the aminoacyl-tRNA.EF-Tu.GTP complex up to the GTP hydrolysis stage on the ribosome.</text>
</comment>
<comment type="subcellular location">
    <subcellularLocation>
        <location evidence="1">Cytoplasm</location>
    </subcellularLocation>
</comment>
<comment type="similarity">
    <text evidence="1">Belongs to the EF-Ts family.</text>
</comment>
<reference key="1">
    <citation type="journal article" date="2007" name="PLoS Genet.">
        <title>Patterns and implications of gene gain and loss in the evolution of Prochlorococcus.</title>
        <authorList>
            <person name="Kettler G.C."/>
            <person name="Martiny A.C."/>
            <person name="Huang K."/>
            <person name="Zucker J."/>
            <person name="Coleman M.L."/>
            <person name="Rodrigue S."/>
            <person name="Chen F."/>
            <person name="Lapidus A."/>
            <person name="Ferriera S."/>
            <person name="Johnson J."/>
            <person name="Steglich C."/>
            <person name="Church G.M."/>
            <person name="Richardson P."/>
            <person name="Chisholm S.W."/>
        </authorList>
    </citation>
    <scope>NUCLEOTIDE SEQUENCE [LARGE SCALE GENOMIC DNA]</scope>
    <source>
        <strain>MIT 9303</strain>
    </source>
</reference>
<name>EFTS_PROM3</name>
<keyword id="KW-0963">Cytoplasm</keyword>
<keyword id="KW-0251">Elongation factor</keyword>
<keyword id="KW-0648">Protein biosynthesis</keyword>
<feature type="chain" id="PRO_1000006147" description="Elongation factor Ts">
    <location>
        <begin position="1"/>
        <end position="218"/>
    </location>
</feature>
<feature type="region of interest" description="Involved in Mg(2+) ion dislocation from EF-Tu" evidence="1">
    <location>
        <begin position="82"/>
        <end position="85"/>
    </location>
</feature>
<dbReference type="EMBL" id="CP000554">
    <property type="protein sequence ID" value="ABM78409.1"/>
    <property type="molecule type" value="Genomic_DNA"/>
</dbReference>
<dbReference type="RefSeq" id="WP_011826297.1">
    <property type="nucleotide sequence ID" value="NC_008820.1"/>
</dbReference>
<dbReference type="SMR" id="A2CA99"/>
<dbReference type="STRING" id="59922.P9303_16651"/>
<dbReference type="KEGG" id="pmf:P9303_16651"/>
<dbReference type="HOGENOM" id="CLU_047155_1_1_3"/>
<dbReference type="BioCyc" id="PMAR59922:G1G80-1447-MONOMER"/>
<dbReference type="Proteomes" id="UP000002274">
    <property type="component" value="Chromosome"/>
</dbReference>
<dbReference type="GO" id="GO:0005737">
    <property type="term" value="C:cytoplasm"/>
    <property type="evidence" value="ECO:0007669"/>
    <property type="project" value="UniProtKB-SubCell"/>
</dbReference>
<dbReference type="GO" id="GO:0003746">
    <property type="term" value="F:translation elongation factor activity"/>
    <property type="evidence" value="ECO:0007669"/>
    <property type="project" value="UniProtKB-UniRule"/>
</dbReference>
<dbReference type="CDD" id="cd14275">
    <property type="entry name" value="UBA_EF-Ts"/>
    <property type="match status" value="1"/>
</dbReference>
<dbReference type="FunFam" id="1.10.286.20:FF:000001">
    <property type="entry name" value="Elongation factor Ts"/>
    <property type="match status" value="1"/>
</dbReference>
<dbReference type="FunFam" id="1.10.8.10:FF:000001">
    <property type="entry name" value="Elongation factor Ts"/>
    <property type="match status" value="1"/>
</dbReference>
<dbReference type="Gene3D" id="1.10.286.20">
    <property type="match status" value="1"/>
</dbReference>
<dbReference type="Gene3D" id="1.10.8.10">
    <property type="entry name" value="DNA helicase RuvA subunit, C-terminal domain"/>
    <property type="match status" value="1"/>
</dbReference>
<dbReference type="Gene3D" id="3.30.479.20">
    <property type="entry name" value="Elongation factor Ts, dimerisation domain"/>
    <property type="match status" value="1"/>
</dbReference>
<dbReference type="HAMAP" id="MF_00050">
    <property type="entry name" value="EF_Ts"/>
    <property type="match status" value="1"/>
</dbReference>
<dbReference type="InterPro" id="IPR036402">
    <property type="entry name" value="EF-Ts_dimer_sf"/>
</dbReference>
<dbReference type="InterPro" id="IPR001816">
    <property type="entry name" value="Transl_elong_EFTs/EF1B"/>
</dbReference>
<dbReference type="InterPro" id="IPR014039">
    <property type="entry name" value="Transl_elong_EFTs/EF1B_dimer"/>
</dbReference>
<dbReference type="InterPro" id="IPR018101">
    <property type="entry name" value="Transl_elong_Ts_CS"/>
</dbReference>
<dbReference type="InterPro" id="IPR009060">
    <property type="entry name" value="UBA-like_sf"/>
</dbReference>
<dbReference type="NCBIfam" id="TIGR00116">
    <property type="entry name" value="tsf"/>
    <property type="match status" value="1"/>
</dbReference>
<dbReference type="PANTHER" id="PTHR11741">
    <property type="entry name" value="ELONGATION FACTOR TS"/>
    <property type="match status" value="1"/>
</dbReference>
<dbReference type="PANTHER" id="PTHR11741:SF10">
    <property type="entry name" value="POLYPROTEIN OF EF-TS, CHLOROPLASTIC"/>
    <property type="match status" value="1"/>
</dbReference>
<dbReference type="Pfam" id="PF25025">
    <property type="entry name" value="EF-Ts_N"/>
    <property type="match status" value="1"/>
</dbReference>
<dbReference type="Pfam" id="PF00889">
    <property type="entry name" value="EF_TS"/>
    <property type="match status" value="1"/>
</dbReference>
<dbReference type="SUPFAM" id="SSF54713">
    <property type="entry name" value="Elongation factor Ts (EF-Ts), dimerisation domain"/>
    <property type="match status" value="1"/>
</dbReference>
<dbReference type="SUPFAM" id="SSF46934">
    <property type="entry name" value="UBA-like"/>
    <property type="match status" value="1"/>
</dbReference>
<dbReference type="PROSITE" id="PS01126">
    <property type="entry name" value="EF_TS_1"/>
    <property type="match status" value="1"/>
</dbReference>
<dbReference type="PROSITE" id="PS01127">
    <property type="entry name" value="EF_TS_2"/>
    <property type="match status" value="1"/>
</dbReference>
<protein>
    <recommendedName>
        <fullName evidence="1">Elongation factor Ts</fullName>
        <shortName evidence="1">EF-Ts</shortName>
    </recommendedName>
</protein>
<gene>
    <name evidence="1" type="primary">tsf</name>
    <name type="ordered locus">P9303_16651</name>
</gene>
<accession>A2CA99</accession>
<proteinExistence type="inferred from homology"/>